<feature type="chain" id="PRO_1000012099" description="Bis(5'-nucleosyl)-tetraphosphatase, symmetrical">
    <location>
        <begin position="1"/>
        <end position="280"/>
    </location>
</feature>
<dbReference type="EC" id="3.6.1.41" evidence="1"/>
<dbReference type="EMBL" id="CP000266">
    <property type="protein sequence ID" value="ABF02330.1"/>
    <property type="molecule type" value="Genomic_DNA"/>
</dbReference>
<dbReference type="RefSeq" id="WP_000257186.1">
    <property type="nucleotide sequence ID" value="NC_008258.1"/>
</dbReference>
<dbReference type="SMR" id="Q0T8E6"/>
<dbReference type="KEGG" id="sfv:SFV_0043"/>
<dbReference type="HOGENOM" id="CLU_056184_2_0_6"/>
<dbReference type="Proteomes" id="UP000000659">
    <property type="component" value="Chromosome"/>
</dbReference>
<dbReference type="GO" id="GO:0008803">
    <property type="term" value="F:bis(5'-nucleosyl)-tetraphosphatase (symmetrical) activity"/>
    <property type="evidence" value="ECO:0007669"/>
    <property type="project" value="UniProtKB-UniRule"/>
</dbReference>
<dbReference type="CDD" id="cd07422">
    <property type="entry name" value="MPP_ApaH"/>
    <property type="match status" value="1"/>
</dbReference>
<dbReference type="FunFam" id="3.60.21.10:FF:000013">
    <property type="entry name" value="Bis(5'-nucleosyl)-tetraphosphatase, symmetrical"/>
    <property type="match status" value="1"/>
</dbReference>
<dbReference type="Gene3D" id="3.60.21.10">
    <property type="match status" value="1"/>
</dbReference>
<dbReference type="HAMAP" id="MF_00199">
    <property type="entry name" value="ApaH"/>
    <property type="match status" value="1"/>
</dbReference>
<dbReference type="InterPro" id="IPR004617">
    <property type="entry name" value="ApaH"/>
</dbReference>
<dbReference type="InterPro" id="IPR004843">
    <property type="entry name" value="Calcineurin-like_PHP_ApaH"/>
</dbReference>
<dbReference type="InterPro" id="IPR029052">
    <property type="entry name" value="Metallo-depent_PP-like"/>
</dbReference>
<dbReference type="NCBIfam" id="TIGR00668">
    <property type="entry name" value="apaH"/>
    <property type="match status" value="1"/>
</dbReference>
<dbReference type="NCBIfam" id="NF001204">
    <property type="entry name" value="PRK00166.1"/>
    <property type="match status" value="1"/>
</dbReference>
<dbReference type="PANTHER" id="PTHR40942">
    <property type="match status" value="1"/>
</dbReference>
<dbReference type="PANTHER" id="PTHR40942:SF4">
    <property type="entry name" value="CYTOCHROME C5"/>
    <property type="match status" value="1"/>
</dbReference>
<dbReference type="Pfam" id="PF00149">
    <property type="entry name" value="Metallophos"/>
    <property type="match status" value="1"/>
</dbReference>
<dbReference type="PIRSF" id="PIRSF000903">
    <property type="entry name" value="B5n-ttraPtase_sm"/>
    <property type="match status" value="1"/>
</dbReference>
<dbReference type="SUPFAM" id="SSF56300">
    <property type="entry name" value="Metallo-dependent phosphatases"/>
    <property type="match status" value="1"/>
</dbReference>
<keyword id="KW-0378">Hydrolase</keyword>
<gene>
    <name evidence="1" type="primary">apaH</name>
    <name type="ordered locus">SFV_0043</name>
</gene>
<comment type="function">
    <text evidence="1">Hydrolyzes diadenosine 5',5'''-P1,P4-tetraphosphate to yield ADP.</text>
</comment>
<comment type="catalytic activity">
    <reaction evidence="1">
        <text>P(1),P(4)-bis(5'-adenosyl) tetraphosphate + H2O = 2 ADP + 2 H(+)</text>
        <dbReference type="Rhea" id="RHEA:24252"/>
        <dbReference type="ChEBI" id="CHEBI:15377"/>
        <dbReference type="ChEBI" id="CHEBI:15378"/>
        <dbReference type="ChEBI" id="CHEBI:58141"/>
        <dbReference type="ChEBI" id="CHEBI:456216"/>
        <dbReference type="EC" id="3.6.1.41"/>
    </reaction>
</comment>
<comment type="similarity">
    <text evidence="1">Belongs to the Ap4A hydrolase family.</text>
</comment>
<organism>
    <name type="scientific">Shigella flexneri serotype 5b (strain 8401)</name>
    <dbReference type="NCBI Taxonomy" id="373384"/>
    <lineage>
        <taxon>Bacteria</taxon>
        <taxon>Pseudomonadati</taxon>
        <taxon>Pseudomonadota</taxon>
        <taxon>Gammaproteobacteria</taxon>
        <taxon>Enterobacterales</taxon>
        <taxon>Enterobacteriaceae</taxon>
        <taxon>Shigella</taxon>
    </lineage>
</organism>
<evidence type="ECO:0000255" key="1">
    <source>
        <dbReference type="HAMAP-Rule" id="MF_00199"/>
    </source>
</evidence>
<reference key="1">
    <citation type="journal article" date="2006" name="BMC Genomics">
        <title>Complete genome sequence of Shigella flexneri 5b and comparison with Shigella flexneri 2a.</title>
        <authorList>
            <person name="Nie H."/>
            <person name="Yang F."/>
            <person name="Zhang X."/>
            <person name="Yang J."/>
            <person name="Chen L."/>
            <person name="Wang J."/>
            <person name="Xiong Z."/>
            <person name="Peng J."/>
            <person name="Sun L."/>
            <person name="Dong J."/>
            <person name="Xue Y."/>
            <person name="Xu X."/>
            <person name="Chen S."/>
            <person name="Yao Z."/>
            <person name="Shen Y."/>
            <person name="Jin Q."/>
        </authorList>
    </citation>
    <scope>NUCLEOTIDE SEQUENCE [LARGE SCALE GENOMIC DNA]</scope>
    <source>
        <strain>8401</strain>
    </source>
</reference>
<name>APAH_SHIF8</name>
<accession>Q0T8E6</accession>
<sequence>MATYLIGDVHGCYDELIALLHKVEFTPGKDTLWLTGDLVARGPGSLDVLRYVKSLGDSVRLVLGNHDLHLLAVFAGISRNKPKDRLTPLLEAPDADELLNWLRRQPLLQIDEEKKLVMAHAGITPQWDLQTAKECARDVEAVLSSDSYPFFLDAMYGDMPNNWSPELRGLGRLRFITNAFTRMRFCFPNGQLDMYSKESPEEAPAPLKPWFAIPGPVAEEYSIAFGHWASLEGKGTPEGIYALDTGCCWGGSLTCLRWEDKQYFVQPSNRHKDLGEAAAS</sequence>
<protein>
    <recommendedName>
        <fullName evidence="1">Bis(5'-nucleosyl)-tetraphosphatase, symmetrical</fullName>
        <ecNumber evidence="1">3.6.1.41</ecNumber>
    </recommendedName>
    <alternativeName>
        <fullName evidence="1">Ap4A hydrolase</fullName>
    </alternativeName>
    <alternativeName>
        <fullName evidence="1">Diadenosine 5',5'''-P1,P4-tetraphosphate pyrophosphohydrolase</fullName>
    </alternativeName>
    <alternativeName>
        <fullName evidence="1">Diadenosine tetraphosphatase</fullName>
    </alternativeName>
</protein>
<proteinExistence type="inferred from homology"/>